<keyword id="KW-0067">ATP-binding</keyword>
<keyword id="KW-0997">Cell inner membrane</keyword>
<keyword id="KW-1003">Cell membrane</keyword>
<keyword id="KW-0472">Membrane</keyword>
<keyword id="KW-0547">Nucleotide-binding</keyword>
<keyword id="KW-1278">Translocase</keyword>
<keyword id="KW-0813">Transport</keyword>
<organism>
    <name type="scientific">Salmonella typhi</name>
    <dbReference type="NCBI Taxonomy" id="90370"/>
    <lineage>
        <taxon>Bacteria</taxon>
        <taxon>Pseudomonadati</taxon>
        <taxon>Pseudomonadota</taxon>
        <taxon>Gammaproteobacteria</taxon>
        <taxon>Enterobacterales</taxon>
        <taxon>Enterobacteriaceae</taxon>
        <taxon>Salmonella</taxon>
    </lineage>
</organism>
<proteinExistence type="inferred from homology"/>
<sequence>MGQSKKLNKQPRSLSPLVLLSGISKSFDGKEVISQLDLTINNGEFLTLLGPSGCGKTTVLRLIAGLETVDAGHIMLDNQDITHVPAENRYVNTVFQSYALFPHMTVFENVAFGLRMQKTPAAEIAPRVTDALRMVQLEEFAQRKPHQLSGGQQQRVAIARAVVNKPRLLLLDESLSALDYKLRKQMQNELKALQRKLGITFVFVTHDQEEALTMSDRIVVMRNGVIEQDGTPREIYEEPKNLFVAGFIGEINRFDATVIERLDEQRVRASVEGRECNIYVNFAVELGQKLNVLLRPEDLRVEEINDDNHIEGLIGYVRERNYKGMTLESVVELENGKMVMVSEFFNEDDPDFDHSLDQKMAISWVESWEVVLADEEHK</sequence>
<accession>Q8Z7H7</accession>
<accession>Q7C9E2</accession>
<comment type="function">
    <text evidence="1">Part of the ABC transporter complex PotABCD involved in spermidine/putrescine import. Responsible for energy coupling to the transport system.</text>
</comment>
<comment type="catalytic activity">
    <reaction evidence="1">
        <text>ATP + H2O + polyamine-[polyamine-binding protein]Side 1 = ADP + phosphate + polyamineSide 2 + [polyamine-binding protein]Side 1.</text>
        <dbReference type="EC" id="7.6.2.11"/>
    </reaction>
</comment>
<comment type="subunit">
    <text evidence="1">The complex is composed of two ATP-binding proteins (PotA), two transmembrane proteins (PotB and PotC) and a solute-binding protein (PotD).</text>
</comment>
<comment type="subcellular location">
    <subcellularLocation>
        <location evidence="1">Cell inner membrane</location>
        <topology evidence="1">Peripheral membrane protein</topology>
    </subcellularLocation>
</comment>
<comment type="similarity">
    <text evidence="1">Belongs to the ABC transporter superfamily. Spermidine/putrescine importer (TC 3.A.1.11.1) family.</text>
</comment>
<feature type="chain" id="PRO_0000286283" description="Spermidine/putrescine import ATP-binding protein PotA">
    <location>
        <begin position="1"/>
        <end position="378"/>
    </location>
</feature>
<feature type="domain" description="ABC transporter" evidence="1">
    <location>
        <begin position="18"/>
        <end position="248"/>
    </location>
</feature>
<feature type="binding site" evidence="1">
    <location>
        <begin position="50"/>
        <end position="57"/>
    </location>
    <ligand>
        <name>ATP</name>
        <dbReference type="ChEBI" id="CHEBI:30616"/>
    </ligand>
</feature>
<reference key="1">
    <citation type="journal article" date="2001" name="Nature">
        <title>Complete genome sequence of a multiple drug resistant Salmonella enterica serovar Typhi CT18.</title>
        <authorList>
            <person name="Parkhill J."/>
            <person name="Dougan G."/>
            <person name="James K.D."/>
            <person name="Thomson N.R."/>
            <person name="Pickard D."/>
            <person name="Wain J."/>
            <person name="Churcher C.M."/>
            <person name="Mungall K.L."/>
            <person name="Bentley S.D."/>
            <person name="Holden M.T.G."/>
            <person name="Sebaihia M."/>
            <person name="Baker S."/>
            <person name="Basham D."/>
            <person name="Brooks K."/>
            <person name="Chillingworth T."/>
            <person name="Connerton P."/>
            <person name="Cronin A."/>
            <person name="Davis P."/>
            <person name="Davies R.M."/>
            <person name="Dowd L."/>
            <person name="White N."/>
            <person name="Farrar J."/>
            <person name="Feltwell T."/>
            <person name="Hamlin N."/>
            <person name="Haque A."/>
            <person name="Hien T.T."/>
            <person name="Holroyd S."/>
            <person name="Jagels K."/>
            <person name="Krogh A."/>
            <person name="Larsen T.S."/>
            <person name="Leather S."/>
            <person name="Moule S."/>
            <person name="O'Gaora P."/>
            <person name="Parry C."/>
            <person name="Quail M.A."/>
            <person name="Rutherford K.M."/>
            <person name="Simmonds M."/>
            <person name="Skelton J."/>
            <person name="Stevens K."/>
            <person name="Whitehead S."/>
            <person name="Barrell B.G."/>
        </authorList>
    </citation>
    <scope>NUCLEOTIDE SEQUENCE [LARGE SCALE GENOMIC DNA]</scope>
    <source>
        <strain>CT18</strain>
    </source>
</reference>
<reference key="2">
    <citation type="journal article" date="2003" name="J. Bacteriol.">
        <title>Comparative genomics of Salmonella enterica serovar Typhi strains Ty2 and CT18.</title>
        <authorList>
            <person name="Deng W."/>
            <person name="Liou S.-R."/>
            <person name="Plunkett G. III"/>
            <person name="Mayhew G.F."/>
            <person name="Rose D.J."/>
            <person name="Burland V."/>
            <person name="Kodoyianni V."/>
            <person name="Schwartz D.C."/>
            <person name="Blattner F.R."/>
        </authorList>
    </citation>
    <scope>NUCLEOTIDE SEQUENCE [LARGE SCALE GENOMIC DNA]</scope>
    <source>
        <strain>ATCC 700931 / Ty2</strain>
    </source>
</reference>
<name>POTA_SALTI</name>
<dbReference type="EC" id="7.6.2.11" evidence="1"/>
<dbReference type="EMBL" id="AL513382">
    <property type="protein sequence ID" value="CAD08350.1"/>
    <property type="molecule type" value="Genomic_DNA"/>
</dbReference>
<dbReference type="EMBL" id="AE014613">
    <property type="protein sequence ID" value="AAO69319.1"/>
    <property type="molecule type" value="Genomic_DNA"/>
</dbReference>
<dbReference type="RefSeq" id="NP_455718.1">
    <property type="nucleotide sequence ID" value="NC_003198.1"/>
</dbReference>
<dbReference type="RefSeq" id="WP_000531581.1">
    <property type="nucleotide sequence ID" value="NZ_WSUR01000030.1"/>
</dbReference>
<dbReference type="SMR" id="Q8Z7H7"/>
<dbReference type="STRING" id="220341.gene:17585230"/>
<dbReference type="KEGG" id="stt:t1694"/>
<dbReference type="KEGG" id="sty:STY1266"/>
<dbReference type="PATRIC" id="fig|220341.7.peg.1271"/>
<dbReference type="eggNOG" id="COG3842">
    <property type="taxonomic scope" value="Bacteria"/>
</dbReference>
<dbReference type="HOGENOM" id="CLU_000604_1_1_6"/>
<dbReference type="OMA" id="HVMRFGE"/>
<dbReference type="OrthoDB" id="9802264at2"/>
<dbReference type="Proteomes" id="UP000000541">
    <property type="component" value="Chromosome"/>
</dbReference>
<dbReference type="Proteomes" id="UP000002670">
    <property type="component" value="Chromosome"/>
</dbReference>
<dbReference type="GO" id="GO:0043190">
    <property type="term" value="C:ATP-binding cassette (ABC) transporter complex"/>
    <property type="evidence" value="ECO:0007669"/>
    <property type="project" value="InterPro"/>
</dbReference>
<dbReference type="GO" id="GO:0015594">
    <property type="term" value="F:ABC-type putrescine transporter activity"/>
    <property type="evidence" value="ECO:0007669"/>
    <property type="project" value="InterPro"/>
</dbReference>
<dbReference type="GO" id="GO:0005524">
    <property type="term" value="F:ATP binding"/>
    <property type="evidence" value="ECO:0007669"/>
    <property type="project" value="UniProtKB-KW"/>
</dbReference>
<dbReference type="GO" id="GO:0016887">
    <property type="term" value="F:ATP hydrolysis activity"/>
    <property type="evidence" value="ECO:0007669"/>
    <property type="project" value="InterPro"/>
</dbReference>
<dbReference type="CDD" id="cd03300">
    <property type="entry name" value="ABC_PotA_N"/>
    <property type="match status" value="1"/>
</dbReference>
<dbReference type="FunFam" id="2.40.50.100:FF:000017">
    <property type="entry name" value="Spermidine/putrescine import ATP-binding protein PotA"/>
    <property type="match status" value="1"/>
</dbReference>
<dbReference type="FunFam" id="3.40.50.300:FF:000133">
    <property type="entry name" value="Spermidine/putrescine import ATP-binding protein PotA"/>
    <property type="match status" value="1"/>
</dbReference>
<dbReference type="Gene3D" id="2.40.50.100">
    <property type="match status" value="1"/>
</dbReference>
<dbReference type="Gene3D" id="3.40.50.300">
    <property type="entry name" value="P-loop containing nucleotide triphosphate hydrolases"/>
    <property type="match status" value="1"/>
</dbReference>
<dbReference type="InterPro" id="IPR003593">
    <property type="entry name" value="AAA+_ATPase"/>
</dbReference>
<dbReference type="InterPro" id="IPR050093">
    <property type="entry name" value="ABC_SmlMolc_Importer"/>
</dbReference>
<dbReference type="InterPro" id="IPR003439">
    <property type="entry name" value="ABC_transporter-like_ATP-bd"/>
</dbReference>
<dbReference type="InterPro" id="IPR017871">
    <property type="entry name" value="ABC_transporter-like_CS"/>
</dbReference>
<dbReference type="InterPro" id="IPR008995">
    <property type="entry name" value="Mo/tungstate-bd_C_term_dom"/>
</dbReference>
<dbReference type="InterPro" id="IPR027417">
    <property type="entry name" value="P-loop_NTPase"/>
</dbReference>
<dbReference type="InterPro" id="IPR005893">
    <property type="entry name" value="PotA-like"/>
</dbReference>
<dbReference type="InterPro" id="IPR017879">
    <property type="entry name" value="PotA_ATP-bd"/>
</dbReference>
<dbReference type="InterPro" id="IPR013611">
    <property type="entry name" value="Transp-assoc_OB_typ2"/>
</dbReference>
<dbReference type="NCBIfam" id="TIGR01187">
    <property type="entry name" value="potA"/>
    <property type="match status" value="1"/>
</dbReference>
<dbReference type="NCBIfam" id="NF006987">
    <property type="entry name" value="PRK09452.1"/>
    <property type="match status" value="1"/>
</dbReference>
<dbReference type="PANTHER" id="PTHR42781">
    <property type="entry name" value="SPERMIDINE/PUTRESCINE IMPORT ATP-BINDING PROTEIN POTA"/>
    <property type="match status" value="1"/>
</dbReference>
<dbReference type="PANTHER" id="PTHR42781:SF4">
    <property type="entry name" value="SPERMIDINE_PUTRESCINE IMPORT ATP-BINDING PROTEIN POTA"/>
    <property type="match status" value="1"/>
</dbReference>
<dbReference type="Pfam" id="PF00005">
    <property type="entry name" value="ABC_tran"/>
    <property type="match status" value="1"/>
</dbReference>
<dbReference type="Pfam" id="PF08402">
    <property type="entry name" value="TOBE_2"/>
    <property type="match status" value="1"/>
</dbReference>
<dbReference type="SMART" id="SM00382">
    <property type="entry name" value="AAA"/>
    <property type="match status" value="1"/>
</dbReference>
<dbReference type="SUPFAM" id="SSF50331">
    <property type="entry name" value="MOP-like"/>
    <property type="match status" value="1"/>
</dbReference>
<dbReference type="SUPFAM" id="SSF52540">
    <property type="entry name" value="P-loop containing nucleoside triphosphate hydrolases"/>
    <property type="match status" value="1"/>
</dbReference>
<dbReference type="PROSITE" id="PS00211">
    <property type="entry name" value="ABC_TRANSPORTER_1"/>
    <property type="match status" value="1"/>
</dbReference>
<dbReference type="PROSITE" id="PS50893">
    <property type="entry name" value="ABC_TRANSPORTER_2"/>
    <property type="match status" value="1"/>
</dbReference>
<dbReference type="PROSITE" id="PS51305">
    <property type="entry name" value="POTA"/>
    <property type="match status" value="1"/>
</dbReference>
<gene>
    <name evidence="1" type="primary">potA</name>
    <name type="ordered locus">STY1266</name>
    <name type="ordered locus">t1694</name>
</gene>
<protein>
    <recommendedName>
        <fullName evidence="1">Spermidine/putrescine import ATP-binding protein PotA</fullName>
        <ecNumber evidence="1">7.6.2.11</ecNumber>
    </recommendedName>
</protein>
<evidence type="ECO:0000255" key="1">
    <source>
        <dbReference type="HAMAP-Rule" id="MF_01726"/>
    </source>
</evidence>